<dbReference type="EC" id="2.7.1.50" evidence="1"/>
<dbReference type="EMBL" id="AE010299">
    <property type="protein sequence ID" value="AAM06102.1"/>
    <property type="molecule type" value="Genomic_DNA"/>
</dbReference>
<dbReference type="RefSeq" id="WP_011022683.1">
    <property type="nucleotide sequence ID" value="NC_003552.1"/>
</dbReference>
<dbReference type="SMR" id="Q8TMD5"/>
<dbReference type="STRING" id="188937.MA_2723"/>
<dbReference type="EnsemblBacteria" id="AAM06102">
    <property type="protein sequence ID" value="AAM06102"/>
    <property type="gene ID" value="MA_2723"/>
</dbReference>
<dbReference type="GeneID" id="1474616"/>
<dbReference type="KEGG" id="mac:MA_2723"/>
<dbReference type="HOGENOM" id="CLU_019943_0_1_2"/>
<dbReference type="InParanoid" id="Q8TMD5"/>
<dbReference type="OrthoDB" id="214286at2157"/>
<dbReference type="PhylomeDB" id="Q8TMD5"/>
<dbReference type="UniPathway" id="UPA00060">
    <property type="reaction ID" value="UER00139"/>
</dbReference>
<dbReference type="Proteomes" id="UP000002487">
    <property type="component" value="Chromosome"/>
</dbReference>
<dbReference type="GO" id="GO:0005524">
    <property type="term" value="F:ATP binding"/>
    <property type="evidence" value="ECO:0007669"/>
    <property type="project" value="UniProtKB-UniRule"/>
</dbReference>
<dbReference type="GO" id="GO:0004417">
    <property type="term" value="F:hydroxyethylthiazole kinase activity"/>
    <property type="evidence" value="ECO:0007669"/>
    <property type="project" value="UniProtKB-UniRule"/>
</dbReference>
<dbReference type="GO" id="GO:0000287">
    <property type="term" value="F:magnesium ion binding"/>
    <property type="evidence" value="ECO:0007669"/>
    <property type="project" value="UniProtKB-UniRule"/>
</dbReference>
<dbReference type="GO" id="GO:0009228">
    <property type="term" value="P:thiamine biosynthetic process"/>
    <property type="evidence" value="ECO:0007669"/>
    <property type="project" value="UniProtKB-KW"/>
</dbReference>
<dbReference type="GO" id="GO:0009229">
    <property type="term" value="P:thiamine diphosphate biosynthetic process"/>
    <property type="evidence" value="ECO:0007669"/>
    <property type="project" value="UniProtKB-UniRule"/>
</dbReference>
<dbReference type="CDD" id="cd01170">
    <property type="entry name" value="THZ_kinase"/>
    <property type="match status" value="1"/>
</dbReference>
<dbReference type="Gene3D" id="3.40.1190.20">
    <property type="match status" value="1"/>
</dbReference>
<dbReference type="HAMAP" id="MF_00228">
    <property type="entry name" value="Thz_kinase"/>
    <property type="match status" value="1"/>
</dbReference>
<dbReference type="InterPro" id="IPR000417">
    <property type="entry name" value="Hyethyz_kinase"/>
</dbReference>
<dbReference type="InterPro" id="IPR029056">
    <property type="entry name" value="Ribokinase-like"/>
</dbReference>
<dbReference type="NCBIfam" id="NF006830">
    <property type="entry name" value="PRK09355.1"/>
    <property type="match status" value="1"/>
</dbReference>
<dbReference type="NCBIfam" id="TIGR00694">
    <property type="entry name" value="thiM"/>
    <property type="match status" value="1"/>
</dbReference>
<dbReference type="Pfam" id="PF02110">
    <property type="entry name" value="HK"/>
    <property type="match status" value="1"/>
</dbReference>
<dbReference type="PIRSF" id="PIRSF000513">
    <property type="entry name" value="Thz_kinase"/>
    <property type="match status" value="1"/>
</dbReference>
<dbReference type="PRINTS" id="PR01099">
    <property type="entry name" value="HYETHTZKNASE"/>
</dbReference>
<dbReference type="SUPFAM" id="SSF53613">
    <property type="entry name" value="Ribokinase-like"/>
    <property type="match status" value="1"/>
</dbReference>
<gene>
    <name evidence="1" type="primary">thiM</name>
    <name type="ordered locus">MA_2723</name>
</gene>
<protein>
    <recommendedName>
        <fullName evidence="1">Hydroxyethylthiazole kinase</fullName>
        <ecNumber evidence="1">2.7.1.50</ecNumber>
    </recommendedName>
    <alternativeName>
        <fullName evidence="1">4-methyl-5-beta-hydroxyethylthiazole kinase</fullName>
        <shortName evidence="1">TH kinase</shortName>
        <shortName evidence="1">Thz kinase</shortName>
    </alternativeName>
</protein>
<reference key="1">
    <citation type="journal article" date="2002" name="Genome Res.">
        <title>The genome of Methanosarcina acetivorans reveals extensive metabolic and physiological diversity.</title>
        <authorList>
            <person name="Galagan J.E."/>
            <person name="Nusbaum C."/>
            <person name="Roy A."/>
            <person name="Endrizzi M.G."/>
            <person name="Macdonald P."/>
            <person name="FitzHugh W."/>
            <person name="Calvo S."/>
            <person name="Engels R."/>
            <person name="Smirnov S."/>
            <person name="Atnoor D."/>
            <person name="Brown A."/>
            <person name="Allen N."/>
            <person name="Naylor J."/>
            <person name="Stange-Thomann N."/>
            <person name="DeArellano K."/>
            <person name="Johnson R."/>
            <person name="Linton L."/>
            <person name="McEwan P."/>
            <person name="McKernan K."/>
            <person name="Talamas J."/>
            <person name="Tirrell A."/>
            <person name="Ye W."/>
            <person name="Zimmer A."/>
            <person name="Barber R.D."/>
            <person name="Cann I."/>
            <person name="Graham D.E."/>
            <person name="Grahame D.A."/>
            <person name="Guss A.M."/>
            <person name="Hedderich R."/>
            <person name="Ingram-Smith C."/>
            <person name="Kuettner H.C."/>
            <person name="Krzycki J.A."/>
            <person name="Leigh J.A."/>
            <person name="Li W."/>
            <person name="Liu J."/>
            <person name="Mukhopadhyay B."/>
            <person name="Reeve J.N."/>
            <person name="Smith K."/>
            <person name="Springer T.A."/>
            <person name="Umayam L.A."/>
            <person name="White O."/>
            <person name="White R.H."/>
            <person name="de Macario E.C."/>
            <person name="Ferry J.G."/>
            <person name="Jarrell K.F."/>
            <person name="Jing H."/>
            <person name="Macario A.J.L."/>
            <person name="Paulsen I.T."/>
            <person name="Pritchett M."/>
            <person name="Sowers K.R."/>
            <person name="Swanson R.V."/>
            <person name="Zinder S.H."/>
            <person name="Lander E."/>
            <person name="Metcalf W.W."/>
            <person name="Birren B."/>
        </authorList>
    </citation>
    <scope>NUCLEOTIDE SEQUENCE [LARGE SCALE GENOMIC DNA]</scope>
    <source>
        <strain>ATCC 35395 / DSM 2834 / JCM 12185 / C2A</strain>
    </source>
</reference>
<evidence type="ECO:0000255" key="1">
    <source>
        <dbReference type="HAMAP-Rule" id="MF_00228"/>
    </source>
</evidence>
<name>THIM_METAC</name>
<comment type="function">
    <text evidence="1">Catalyzes the phosphorylation of the hydroxyl group of 4-methyl-5-beta-hydroxyethylthiazole (THZ).</text>
</comment>
<comment type="catalytic activity">
    <reaction evidence="1">
        <text>5-(2-hydroxyethyl)-4-methylthiazole + ATP = 4-methyl-5-(2-phosphooxyethyl)-thiazole + ADP + H(+)</text>
        <dbReference type="Rhea" id="RHEA:24212"/>
        <dbReference type="ChEBI" id="CHEBI:15378"/>
        <dbReference type="ChEBI" id="CHEBI:17957"/>
        <dbReference type="ChEBI" id="CHEBI:30616"/>
        <dbReference type="ChEBI" id="CHEBI:58296"/>
        <dbReference type="ChEBI" id="CHEBI:456216"/>
        <dbReference type="EC" id="2.7.1.50"/>
    </reaction>
</comment>
<comment type="cofactor">
    <cofactor evidence="1">
        <name>Mg(2+)</name>
        <dbReference type="ChEBI" id="CHEBI:18420"/>
    </cofactor>
</comment>
<comment type="pathway">
    <text evidence="1">Cofactor biosynthesis; thiamine diphosphate biosynthesis; 4-methyl-5-(2-phosphoethyl)-thiazole from 5-(2-hydroxyethyl)-4-methylthiazole: step 1/1.</text>
</comment>
<comment type="similarity">
    <text evidence="1">Belongs to the Thz kinase family.</text>
</comment>
<organism>
    <name type="scientific">Methanosarcina acetivorans (strain ATCC 35395 / DSM 2834 / JCM 12185 / C2A)</name>
    <dbReference type="NCBI Taxonomy" id="188937"/>
    <lineage>
        <taxon>Archaea</taxon>
        <taxon>Methanobacteriati</taxon>
        <taxon>Methanobacteriota</taxon>
        <taxon>Stenosarchaea group</taxon>
        <taxon>Methanomicrobia</taxon>
        <taxon>Methanosarcinales</taxon>
        <taxon>Methanosarcinaceae</taxon>
        <taxon>Methanosarcina</taxon>
    </lineage>
</organism>
<keyword id="KW-0067">ATP-binding</keyword>
<keyword id="KW-0418">Kinase</keyword>
<keyword id="KW-0460">Magnesium</keyword>
<keyword id="KW-0479">Metal-binding</keyword>
<keyword id="KW-0547">Nucleotide-binding</keyword>
<keyword id="KW-1185">Reference proteome</keyword>
<keyword id="KW-0784">Thiamine biosynthesis</keyword>
<keyword id="KW-0808">Transferase</keyword>
<proteinExistence type="inferred from homology"/>
<accession>Q8TMD5</accession>
<feature type="chain" id="PRO_0000156968" description="Hydroxyethylthiazole kinase">
    <location>
        <begin position="1"/>
        <end position="261"/>
    </location>
</feature>
<feature type="binding site" evidence="1">
    <location>
        <position position="40"/>
    </location>
    <ligand>
        <name>substrate</name>
    </ligand>
</feature>
<feature type="binding site" evidence="1">
    <location>
        <position position="116"/>
    </location>
    <ligand>
        <name>ATP</name>
        <dbReference type="ChEBI" id="CHEBI:30616"/>
    </ligand>
</feature>
<feature type="binding site" evidence="1">
    <location>
        <position position="162"/>
    </location>
    <ligand>
        <name>ATP</name>
        <dbReference type="ChEBI" id="CHEBI:30616"/>
    </ligand>
</feature>
<feature type="binding site" evidence="1">
    <location>
        <position position="189"/>
    </location>
    <ligand>
        <name>substrate</name>
    </ligand>
</feature>
<sequence length="261" mass="27767">MNEPLKTIRETKPLIHHITNWVTIYECANMTRAFGALPVMAHAPEECADMTKISSALVLNIGTLTSEIIDSMLLSAAAANERDIPVVLDAVGVGATKFRDEMAAKILASVHIDIIKGNYSEIAKLAGENAETKGVEATSIDADPAKVAKAFAKAESCVVVMTGKEDIISDGDRTFIVKNGHELMGSIVGTGCMAASIVGLFAAVNRDYCDAAKDALCYFGASGELAAAKSSGPGSFKVHLYDEVFNLSDEKVKSMKNFEEK</sequence>